<comment type="function">
    <text evidence="1">Attaches a formyl group to the free amino group of methionyl-tRNA(fMet). The formyl group appears to play a dual role in the initiator identity of N-formylmethionyl-tRNA by promoting its recognition by IF2 and preventing the misappropriation of this tRNA by the elongation apparatus.</text>
</comment>
<comment type="catalytic activity">
    <reaction evidence="1">
        <text>L-methionyl-tRNA(fMet) + (6R)-10-formyltetrahydrofolate = N-formyl-L-methionyl-tRNA(fMet) + (6S)-5,6,7,8-tetrahydrofolate + H(+)</text>
        <dbReference type="Rhea" id="RHEA:24380"/>
        <dbReference type="Rhea" id="RHEA-COMP:9952"/>
        <dbReference type="Rhea" id="RHEA-COMP:9953"/>
        <dbReference type="ChEBI" id="CHEBI:15378"/>
        <dbReference type="ChEBI" id="CHEBI:57453"/>
        <dbReference type="ChEBI" id="CHEBI:78530"/>
        <dbReference type="ChEBI" id="CHEBI:78844"/>
        <dbReference type="ChEBI" id="CHEBI:195366"/>
        <dbReference type="EC" id="2.1.2.9"/>
    </reaction>
</comment>
<comment type="similarity">
    <text evidence="1">Belongs to the Fmt family.</text>
</comment>
<name>FMT_LEGPC</name>
<feature type="chain" id="PRO_1000020091" description="Methionyl-tRNA formyltransferase">
    <location>
        <begin position="1"/>
        <end position="314"/>
    </location>
</feature>
<feature type="binding site" evidence="1">
    <location>
        <begin position="112"/>
        <end position="115"/>
    </location>
    <ligand>
        <name>(6S)-5,6,7,8-tetrahydrofolate</name>
        <dbReference type="ChEBI" id="CHEBI:57453"/>
    </ligand>
</feature>
<sequence length="314" mass="34456">MSGLTVVFAGTPEFGLSCLDALIQSRHHLKAVYTQPDRPAGRGRKLQESPVKEWAINNQVPVYQPLNFKNQEAIDELSALKPDVMVVIAYGLILPKAVLEIPRLGCINVHASLLPRWRGASPIQHAILHGDAESGVTIMQMDVGLDTGPMLCKATCPVTSSDTAGSLHDKLAKMSVKPLLDVLEALASNSAQFELQNNELATYAGKINKEEARINWHQSAVEIDRKIRAFNPWPVAYTLAEELMLRIHQAKATDIMSTEMPGMVLNIDKNGMLVATNDNALLVEKIQFPGAKVISVRDWLNSGKTQLHTGLMLQ</sequence>
<accession>A5IAY3</accession>
<keyword id="KW-0648">Protein biosynthesis</keyword>
<keyword id="KW-0808">Transferase</keyword>
<proteinExistence type="inferred from homology"/>
<reference key="1">
    <citation type="submission" date="2006-11" db="EMBL/GenBank/DDBJ databases">
        <title>Identification and characterization of a new conjugation/ type IVA secretion system (trb/tra) of L. pneumophila Corby localized on a mobile genomic island.</title>
        <authorList>
            <person name="Gloeckner G."/>
            <person name="Albert-Weissenberger C."/>
            <person name="Weinmann E."/>
            <person name="Jacobi S."/>
            <person name="Schunder E."/>
            <person name="Steinert M."/>
            <person name="Buchrieser C."/>
            <person name="Hacker J."/>
            <person name="Heuner K."/>
        </authorList>
    </citation>
    <scope>NUCLEOTIDE SEQUENCE [LARGE SCALE GENOMIC DNA]</scope>
    <source>
        <strain>Corby</strain>
    </source>
</reference>
<organism>
    <name type="scientific">Legionella pneumophila (strain Corby)</name>
    <dbReference type="NCBI Taxonomy" id="400673"/>
    <lineage>
        <taxon>Bacteria</taxon>
        <taxon>Pseudomonadati</taxon>
        <taxon>Pseudomonadota</taxon>
        <taxon>Gammaproteobacteria</taxon>
        <taxon>Legionellales</taxon>
        <taxon>Legionellaceae</taxon>
        <taxon>Legionella</taxon>
    </lineage>
</organism>
<gene>
    <name evidence="1" type="primary">fmt</name>
    <name type="ordered locus">LPC_0548</name>
</gene>
<evidence type="ECO:0000255" key="1">
    <source>
        <dbReference type="HAMAP-Rule" id="MF_00182"/>
    </source>
</evidence>
<protein>
    <recommendedName>
        <fullName evidence="1">Methionyl-tRNA formyltransferase</fullName>
        <ecNumber evidence="1">2.1.2.9</ecNumber>
    </recommendedName>
</protein>
<dbReference type="EC" id="2.1.2.9" evidence="1"/>
<dbReference type="EMBL" id="CP000675">
    <property type="protein sequence ID" value="ABQ54533.1"/>
    <property type="molecule type" value="Genomic_DNA"/>
</dbReference>
<dbReference type="RefSeq" id="WP_011947519.1">
    <property type="nucleotide sequence ID" value="NC_009494.2"/>
</dbReference>
<dbReference type="SMR" id="A5IAY3"/>
<dbReference type="KEGG" id="lpc:LPC_0548"/>
<dbReference type="HOGENOM" id="CLU_033347_1_1_6"/>
<dbReference type="GO" id="GO:0005829">
    <property type="term" value="C:cytosol"/>
    <property type="evidence" value="ECO:0007669"/>
    <property type="project" value="TreeGrafter"/>
</dbReference>
<dbReference type="GO" id="GO:0004479">
    <property type="term" value="F:methionyl-tRNA formyltransferase activity"/>
    <property type="evidence" value="ECO:0007669"/>
    <property type="project" value="UniProtKB-UniRule"/>
</dbReference>
<dbReference type="CDD" id="cd08646">
    <property type="entry name" value="FMT_core_Met-tRNA-FMT_N"/>
    <property type="match status" value="1"/>
</dbReference>
<dbReference type="CDD" id="cd08704">
    <property type="entry name" value="Met_tRNA_FMT_C"/>
    <property type="match status" value="1"/>
</dbReference>
<dbReference type="FunFam" id="3.40.50.12230:FF:000001">
    <property type="entry name" value="Methionyl-tRNA formyltransferase"/>
    <property type="match status" value="1"/>
</dbReference>
<dbReference type="Gene3D" id="3.40.50.12230">
    <property type="match status" value="1"/>
</dbReference>
<dbReference type="HAMAP" id="MF_00182">
    <property type="entry name" value="Formyl_trans"/>
    <property type="match status" value="1"/>
</dbReference>
<dbReference type="InterPro" id="IPR005794">
    <property type="entry name" value="Fmt"/>
</dbReference>
<dbReference type="InterPro" id="IPR005793">
    <property type="entry name" value="Formyl_trans_C"/>
</dbReference>
<dbReference type="InterPro" id="IPR002376">
    <property type="entry name" value="Formyl_transf_N"/>
</dbReference>
<dbReference type="InterPro" id="IPR036477">
    <property type="entry name" value="Formyl_transf_N_sf"/>
</dbReference>
<dbReference type="InterPro" id="IPR011034">
    <property type="entry name" value="Formyl_transferase-like_C_sf"/>
</dbReference>
<dbReference type="InterPro" id="IPR001555">
    <property type="entry name" value="GART_AS"/>
</dbReference>
<dbReference type="InterPro" id="IPR044135">
    <property type="entry name" value="Met-tRNA-FMT_C"/>
</dbReference>
<dbReference type="InterPro" id="IPR041711">
    <property type="entry name" value="Met-tRNA-FMT_N"/>
</dbReference>
<dbReference type="NCBIfam" id="TIGR00460">
    <property type="entry name" value="fmt"/>
    <property type="match status" value="1"/>
</dbReference>
<dbReference type="PANTHER" id="PTHR11138">
    <property type="entry name" value="METHIONYL-TRNA FORMYLTRANSFERASE"/>
    <property type="match status" value="1"/>
</dbReference>
<dbReference type="PANTHER" id="PTHR11138:SF5">
    <property type="entry name" value="METHIONYL-TRNA FORMYLTRANSFERASE, MITOCHONDRIAL"/>
    <property type="match status" value="1"/>
</dbReference>
<dbReference type="Pfam" id="PF02911">
    <property type="entry name" value="Formyl_trans_C"/>
    <property type="match status" value="1"/>
</dbReference>
<dbReference type="Pfam" id="PF00551">
    <property type="entry name" value="Formyl_trans_N"/>
    <property type="match status" value="1"/>
</dbReference>
<dbReference type="SUPFAM" id="SSF50486">
    <property type="entry name" value="FMT C-terminal domain-like"/>
    <property type="match status" value="1"/>
</dbReference>
<dbReference type="SUPFAM" id="SSF53328">
    <property type="entry name" value="Formyltransferase"/>
    <property type="match status" value="1"/>
</dbReference>
<dbReference type="PROSITE" id="PS00373">
    <property type="entry name" value="GART"/>
    <property type="match status" value="1"/>
</dbReference>